<proteinExistence type="inferred from homology"/>
<feature type="chain" id="PRO_1000123388" description="3-methyl-2-oxobutanoate hydroxymethyltransferase">
    <location>
        <begin position="1"/>
        <end position="273"/>
    </location>
</feature>
<feature type="active site" description="Proton acceptor" evidence="1">
    <location>
        <position position="187"/>
    </location>
</feature>
<feature type="binding site" evidence="1">
    <location>
        <begin position="49"/>
        <end position="50"/>
    </location>
    <ligand>
        <name>3-methyl-2-oxobutanoate</name>
        <dbReference type="ChEBI" id="CHEBI:11851"/>
    </ligand>
</feature>
<feature type="binding site" evidence="1">
    <location>
        <position position="49"/>
    </location>
    <ligand>
        <name>Mg(2+)</name>
        <dbReference type="ChEBI" id="CHEBI:18420"/>
    </ligand>
</feature>
<feature type="binding site" evidence="1">
    <location>
        <position position="88"/>
    </location>
    <ligand>
        <name>3-methyl-2-oxobutanoate</name>
        <dbReference type="ChEBI" id="CHEBI:11851"/>
    </ligand>
</feature>
<feature type="binding site" evidence="1">
    <location>
        <position position="88"/>
    </location>
    <ligand>
        <name>Mg(2+)</name>
        <dbReference type="ChEBI" id="CHEBI:18420"/>
    </ligand>
</feature>
<feature type="binding site" evidence="1">
    <location>
        <position position="118"/>
    </location>
    <ligand>
        <name>3-methyl-2-oxobutanoate</name>
        <dbReference type="ChEBI" id="CHEBI:11851"/>
    </ligand>
</feature>
<feature type="binding site" evidence="1">
    <location>
        <position position="120"/>
    </location>
    <ligand>
        <name>Mg(2+)</name>
        <dbReference type="ChEBI" id="CHEBI:18420"/>
    </ligand>
</feature>
<evidence type="ECO:0000255" key="1">
    <source>
        <dbReference type="HAMAP-Rule" id="MF_00156"/>
    </source>
</evidence>
<organism>
    <name type="scientific">Sinorhizobium fredii (strain NBRC 101917 / NGR234)</name>
    <dbReference type="NCBI Taxonomy" id="394"/>
    <lineage>
        <taxon>Bacteria</taxon>
        <taxon>Pseudomonadati</taxon>
        <taxon>Pseudomonadota</taxon>
        <taxon>Alphaproteobacteria</taxon>
        <taxon>Hyphomicrobiales</taxon>
        <taxon>Rhizobiaceae</taxon>
        <taxon>Sinorhizobium/Ensifer group</taxon>
        <taxon>Sinorhizobium</taxon>
    </lineage>
</organism>
<accession>C3MEL6</accession>
<protein>
    <recommendedName>
        <fullName evidence="1">3-methyl-2-oxobutanoate hydroxymethyltransferase</fullName>
        <ecNumber evidence="1">2.1.2.11</ecNumber>
    </recommendedName>
    <alternativeName>
        <fullName evidence="1">Ketopantoate hydroxymethyltransferase</fullName>
        <shortName evidence="1">KPHMT</shortName>
    </alternativeName>
</protein>
<dbReference type="EC" id="2.1.2.11" evidence="1"/>
<dbReference type="EMBL" id="CP001389">
    <property type="protein sequence ID" value="ACP25857.1"/>
    <property type="molecule type" value="Genomic_DNA"/>
</dbReference>
<dbReference type="RefSeq" id="WP_012708620.1">
    <property type="nucleotide sequence ID" value="NC_012587.1"/>
</dbReference>
<dbReference type="RefSeq" id="YP_002826610.1">
    <property type="nucleotide sequence ID" value="NC_012587.1"/>
</dbReference>
<dbReference type="SMR" id="C3MEL6"/>
<dbReference type="STRING" id="394.NGR_c20940"/>
<dbReference type="KEGG" id="rhi:NGR_c20940"/>
<dbReference type="PATRIC" id="fig|394.7.peg.4917"/>
<dbReference type="eggNOG" id="COG0413">
    <property type="taxonomic scope" value="Bacteria"/>
</dbReference>
<dbReference type="HOGENOM" id="CLU_036645_1_0_5"/>
<dbReference type="OrthoDB" id="9781789at2"/>
<dbReference type="UniPathway" id="UPA00028">
    <property type="reaction ID" value="UER00003"/>
</dbReference>
<dbReference type="Proteomes" id="UP000001054">
    <property type="component" value="Chromosome"/>
</dbReference>
<dbReference type="GO" id="GO:0005737">
    <property type="term" value="C:cytoplasm"/>
    <property type="evidence" value="ECO:0007669"/>
    <property type="project" value="UniProtKB-SubCell"/>
</dbReference>
<dbReference type="GO" id="GO:0003864">
    <property type="term" value="F:3-methyl-2-oxobutanoate hydroxymethyltransferase activity"/>
    <property type="evidence" value="ECO:0007669"/>
    <property type="project" value="UniProtKB-UniRule"/>
</dbReference>
<dbReference type="GO" id="GO:0000287">
    <property type="term" value="F:magnesium ion binding"/>
    <property type="evidence" value="ECO:0007669"/>
    <property type="project" value="TreeGrafter"/>
</dbReference>
<dbReference type="GO" id="GO:0015940">
    <property type="term" value="P:pantothenate biosynthetic process"/>
    <property type="evidence" value="ECO:0007669"/>
    <property type="project" value="UniProtKB-UniRule"/>
</dbReference>
<dbReference type="CDD" id="cd06557">
    <property type="entry name" value="KPHMT-like"/>
    <property type="match status" value="1"/>
</dbReference>
<dbReference type="FunFam" id="3.20.20.60:FF:000003">
    <property type="entry name" value="3-methyl-2-oxobutanoate hydroxymethyltransferase"/>
    <property type="match status" value="1"/>
</dbReference>
<dbReference type="Gene3D" id="3.20.20.60">
    <property type="entry name" value="Phosphoenolpyruvate-binding domains"/>
    <property type="match status" value="1"/>
</dbReference>
<dbReference type="HAMAP" id="MF_00156">
    <property type="entry name" value="PanB"/>
    <property type="match status" value="1"/>
</dbReference>
<dbReference type="InterPro" id="IPR003700">
    <property type="entry name" value="Pantoate_hydroxy_MeTrfase"/>
</dbReference>
<dbReference type="InterPro" id="IPR015813">
    <property type="entry name" value="Pyrv/PenolPyrv_kinase-like_dom"/>
</dbReference>
<dbReference type="InterPro" id="IPR040442">
    <property type="entry name" value="Pyrv_kinase-like_dom_sf"/>
</dbReference>
<dbReference type="NCBIfam" id="TIGR00222">
    <property type="entry name" value="panB"/>
    <property type="match status" value="1"/>
</dbReference>
<dbReference type="NCBIfam" id="NF001452">
    <property type="entry name" value="PRK00311.1"/>
    <property type="match status" value="1"/>
</dbReference>
<dbReference type="PANTHER" id="PTHR20881">
    <property type="entry name" value="3-METHYL-2-OXOBUTANOATE HYDROXYMETHYLTRANSFERASE"/>
    <property type="match status" value="1"/>
</dbReference>
<dbReference type="PANTHER" id="PTHR20881:SF0">
    <property type="entry name" value="3-METHYL-2-OXOBUTANOATE HYDROXYMETHYLTRANSFERASE"/>
    <property type="match status" value="1"/>
</dbReference>
<dbReference type="Pfam" id="PF02548">
    <property type="entry name" value="Pantoate_transf"/>
    <property type="match status" value="1"/>
</dbReference>
<dbReference type="PIRSF" id="PIRSF000388">
    <property type="entry name" value="Pantoate_hydroxy_MeTrfase"/>
    <property type="match status" value="1"/>
</dbReference>
<dbReference type="SUPFAM" id="SSF51621">
    <property type="entry name" value="Phosphoenolpyruvate/pyruvate domain"/>
    <property type="match status" value="1"/>
</dbReference>
<name>PANB_SINFN</name>
<sequence length="273" mass="29421">MSVQTTKRRLSPASIEALKGERPIVSLTAYTTPIARLLDPHVDFLLVGDSLGMVLYGLDTTVGVTLDMMIAHGQAVMRGSERSCIVIDLPFGSYQESKEQAFRSAARILKETGCSAVKLEGGAEMAETVDFLVSRGIPVLGHVGLMPQLVNTTGGYRSVGRNEKEVAKIRRDAKAIDDAGAFAIVVEGTVEPVAREITATLRCPTIGIGASPACDGQILVSDDMLGIFNDFKPRFVKHFAELAPAISKAVEDYANEVKARTFPGIEHTFQVKR</sequence>
<comment type="function">
    <text evidence="1">Catalyzes the reversible reaction in which hydroxymethyl group from 5,10-methylenetetrahydrofolate is transferred onto alpha-ketoisovalerate to form ketopantoate.</text>
</comment>
<comment type="catalytic activity">
    <reaction evidence="1">
        <text>3-methyl-2-oxobutanoate + (6R)-5,10-methylene-5,6,7,8-tetrahydrofolate + H2O = 2-dehydropantoate + (6S)-5,6,7,8-tetrahydrofolate</text>
        <dbReference type="Rhea" id="RHEA:11824"/>
        <dbReference type="ChEBI" id="CHEBI:11561"/>
        <dbReference type="ChEBI" id="CHEBI:11851"/>
        <dbReference type="ChEBI" id="CHEBI:15377"/>
        <dbReference type="ChEBI" id="CHEBI:15636"/>
        <dbReference type="ChEBI" id="CHEBI:57453"/>
        <dbReference type="EC" id="2.1.2.11"/>
    </reaction>
</comment>
<comment type="cofactor">
    <cofactor evidence="1">
        <name>Mg(2+)</name>
        <dbReference type="ChEBI" id="CHEBI:18420"/>
    </cofactor>
    <text evidence="1">Binds 1 Mg(2+) ion per subunit.</text>
</comment>
<comment type="pathway">
    <text evidence="1">Cofactor biosynthesis; (R)-pantothenate biosynthesis; (R)-pantoate from 3-methyl-2-oxobutanoate: step 1/2.</text>
</comment>
<comment type="subunit">
    <text evidence="1">Homodecamer; pentamer of dimers.</text>
</comment>
<comment type="subcellular location">
    <subcellularLocation>
        <location evidence="1">Cytoplasm</location>
    </subcellularLocation>
</comment>
<comment type="similarity">
    <text evidence="1">Belongs to the PanB family.</text>
</comment>
<reference key="1">
    <citation type="journal article" date="2009" name="Appl. Environ. Microbiol.">
        <title>Rhizobium sp. strain NGR234 possesses a remarkable number of secretion systems.</title>
        <authorList>
            <person name="Schmeisser C."/>
            <person name="Liesegang H."/>
            <person name="Krysciak D."/>
            <person name="Bakkou N."/>
            <person name="Le Quere A."/>
            <person name="Wollherr A."/>
            <person name="Heinemeyer I."/>
            <person name="Morgenstern B."/>
            <person name="Pommerening-Roeser A."/>
            <person name="Flores M."/>
            <person name="Palacios R."/>
            <person name="Brenner S."/>
            <person name="Gottschalk G."/>
            <person name="Schmitz R.A."/>
            <person name="Broughton W.J."/>
            <person name="Perret X."/>
            <person name="Strittmatter A.W."/>
            <person name="Streit W.R."/>
        </authorList>
    </citation>
    <scope>NUCLEOTIDE SEQUENCE [LARGE SCALE GENOMIC DNA]</scope>
    <source>
        <strain>NBRC 101917 / NGR234</strain>
    </source>
</reference>
<gene>
    <name evidence="1" type="primary">panB</name>
    <name type="ordered locus">NGR_c20940</name>
</gene>
<keyword id="KW-0963">Cytoplasm</keyword>
<keyword id="KW-0460">Magnesium</keyword>
<keyword id="KW-0479">Metal-binding</keyword>
<keyword id="KW-0566">Pantothenate biosynthesis</keyword>
<keyword id="KW-1185">Reference proteome</keyword>
<keyword id="KW-0808">Transferase</keyword>